<accession>Q9JX28</accession>
<accession>A1INV0</accession>
<sequence>MDVQLPIEAKDIQKLIPHRYPFLQLDRITAFEPMKTLTAIKNVTINEPQFQGHFPDLPVMPGVLIIEAMAQACGTLAILSEGGRKENEFFFFAGIDEARFKRQVIPGDQLVFEVELLTSRRGIGKFNAVAKVDGQVAVEAVIMCAKRVV</sequence>
<comment type="function">
    <text evidence="1">Involved in unsaturated fatty acids biosynthesis. Catalyzes the dehydration of short chain beta-hydroxyacyl-ACPs and long chain saturated and unsaturated beta-hydroxyacyl-ACPs.</text>
</comment>
<comment type="catalytic activity">
    <reaction evidence="1">
        <text>a (3R)-hydroxyacyl-[ACP] = a (2E)-enoyl-[ACP] + H2O</text>
        <dbReference type="Rhea" id="RHEA:13097"/>
        <dbReference type="Rhea" id="RHEA-COMP:9925"/>
        <dbReference type="Rhea" id="RHEA-COMP:9945"/>
        <dbReference type="ChEBI" id="CHEBI:15377"/>
        <dbReference type="ChEBI" id="CHEBI:78784"/>
        <dbReference type="ChEBI" id="CHEBI:78827"/>
        <dbReference type="EC" id="4.2.1.59"/>
    </reaction>
</comment>
<comment type="subcellular location">
    <subcellularLocation>
        <location evidence="1">Cytoplasm</location>
    </subcellularLocation>
</comment>
<comment type="similarity">
    <text evidence="1">Belongs to the thioester dehydratase family. FabZ subfamily.</text>
</comment>
<name>FABZ_NEIMA</name>
<keyword id="KW-0963">Cytoplasm</keyword>
<keyword id="KW-0441">Lipid A biosynthesis</keyword>
<keyword id="KW-0444">Lipid biosynthesis</keyword>
<keyword id="KW-0443">Lipid metabolism</keyword>
<keyword id="KW-0456">Lyase</keyword>
<proteinExistence type="inferred from homology"/>
<organism>
    <name type="scientific">Neisseria meningitidis serogroup A / serotype 4A (strain DSM 15465 / Z2491)</name>
    <dbReference type="NCBI Taxonomy" id="122587"/>
    <lineage>
        <taxon>Bacteria</taxon>
        <taxon>Pseudomonadati</taxon>
        <taxon>Pseudomonadota</taxon>
        <taxon>Betaproteobacteria</taxon>
        <taxon>Neisseriales</taxon>
        <taxon>Neisseriaceae</taxon>
        <taxon>Neisseria</taxon>
    </lineage>
</organism>
<feature type="chain" id="PRO_0000091702" description="3-hydroxyacyl-[acyl-carrier-protein] dehydratase FabZ">
    <location>
        <begin position="1"/>
        <end position="149"/>
    </location>
</feature>
<feature type="active site" evidence="1">
    <location>
        <position position="53"/>
    </location>
</feature>
<protein>
    <recommendedName>
        <fullName evidence="1">3-hydroxyacyl-[acyl-carrier-protein] dehydratase FabZ</fullName>
        <ecNumber evidence="1">4.2.1.59</ecNumber>
    </recommendedName>
    <alternativeName>
        <fullName evidence="1">(3R)-hydroxymyristoyl-[acyl-carrier-protein] dehydratase</fullName>
        <shortName evidence="1">(3R)-hydroxymyristoyl-ACP dehydrase</shortName>
    </alternativeName>
    <alternativeName>
        <fullName evidence="1">Beta-hydroxyacyl-ACP dehydratase</fullName>
    </alternativeName>
</protein>
<gene>
    <name evidence="1" type="primary">fabZ</name>
    <name type="ordered locus">NMA0088</name>
</gene>
<evidence type="ECO:0000255" key="1">
    <source>
        <dbReference type="HAMAP-Rule" id="MF_00406"/>
    </source>
</evidence>
<reference key="1">
    <citation type="journal article" date="2000" name="Nature">
        <title>Complete DNA sequence of a serogroup A strain of Neisseria meningitidis Z2491.</title>
        <authorList>
            <person name="Parkhill J."/>
            <person name="Achtman M."/>
            <person name="James K.D."/>
            <person name="Bentley S.D."/>
            <person name="Churcher C.M."/>
            <person name="Klee S.R."/>
            <person name="Morelli G."/>
            <person name="Basham D."/>
            <person name="Brown D."/>
            <person name="Chillingworth T."/>
            <person name="Davies R.M."/>
            <person name="Davis P."/>
            <person name="Devlin K."/>
            <person name="Feltwell T."/>
            <person name="Hamlin N."/>
            <person name="Holroyd S."/>
            <person name="Jagels K."/>
            <person name="Leather S."/>
            <person name="Moule S."/>
            <person name="Mungall K.L."/>
            <person name="Quail M.A."/>
            <person name="Rajandream M.A."/>
            <person name="Rutherford K.M."/>
            <person name="Simmonds M."/>
            <person name="Skelton J."/>
            <person name="Whitehead S."/>
            <person name="Spratt B.G."/>
            <person name="Barrell B.G."/>
        </authorList>
    </citation>
    <scope>NUCLEOTIDE SEQUENCE [LARGE SCALE GENOMIC DNA]</scope>
    <source>
        <strain>DSM 15465 / Z2491</strain>
    </source>
</reference>
<dbReference type="EC" id="4.2.1.59" evidence="1"/>
<dbReference type="EMBL" id="AL157959">
    <property type="protein sequence ID" value="CAM07407.1"/>
    <property type="molecule type" value="Genomic_DNA"/>
</dbReference>
<dbReference type="PIR" id="G82000">
    <property type="entry name" value="G82000"/>
</dbReference>
<dbReference type="RefSeq" id="WP_002231544.1">
    <property type="nucleotide sequence ID" value="NC_003116.1"/>
</dbReference>
<dbReference type="SMR" id="Q9JX28"/>
<dbReference type="EnsemblBacteria" id="CAM07407">
    <property type="protein sequence ID" value="CAM07407"/>
    <property type="gene ID" value="NMA0088"/>
</dbReference>
<dbReference type="GeneID" id="93387257"/>
<dbReference type="KEGG" id="nma:NMA0088"/>
<dbReference type="HOGENOM" id="CLU_078912_1_0_4"/>
<dbReference type="Proteomes" id="UP000000626">
    <property type="component" value="Chromosome"/>
</dbReference>
<dbReference type="GO" id="GO:0005737">
    <property type="term" value="C:cytoplasm"/>
    <property type="evidence" value="ECO:0007669"/>
    <property type="project" value="UniProtKB-SubCell"/>
</dbReference>
<dbReference type="GO" id="GO:0016020">
    <property type="term" value="C:membrane"/>
    <property type="evidence" value="ECO:0007669"/>
    <property type="project" value="GOC"/>
</dbReference>
<dbReference type="GO" id="GO:0019171">
    <property type="term" value="F:(3R)-hydroxyacyl-[acyl-carrier-protein] dehydratase activity"/>
    <property type="evidence" value="ECO:0007669"/>
    <property type="project" value="UniProtKB-EC"/>
</dbReference>
<dbReference type="GO" id="GO:0006633">
    <property type="term" value="P:fatty acid biosynthetic process"/>
    <property type="evidence" value="ECO:0007669"/>
    <property type="project" value="UniProtKB-UniRule"/>
</dbReference>
<dbReference type="GO" id="GO:0009245">
    <property type="term" value="P:lipid A biosynthetic process"/>
    <property type="evidence" value="ECO:0007669"/>
    <property type="project" value="UniProtKB-UniRule"/>
</dbReference>
<dbReference type="CDD" id="cd01288">
    <property type="entry name" value="FabZ"/>
    <property type="match status" value="1"/>
</dbReference>
<dbReference type="FunFam" id="3.10.129.10:FF:000001">
    <property type="entry name" value="3-hydroxyacyl-[acyl-carrier-protein] dehydratase FabZ"/>
    <property type="match status" value="1"/>
</dbReference>
<dbReference type="Gene3D" id="3.10.129.10">
    <property type="entry name" value="Hotdog Thioesterase"/>
    <property type="match status" value="1"/>
</dbReference>
<dbReference type="HAMAP" id="MF_00406">
    <property type="entry name" value="FabZ"/>
    <property type="match status" value="1"/>
</dbReference>
<dbReference type="InterPro" id="IPR013114">
    <property type="entry name" value="FabA_FabZ"/>
</dbReference>
<dbReference type="InterPro" id="IPR010084">
    <property type="entry name" value="FabZ"/>
</dbReference>
<dbReference type="InterPro" id="IPR029069">
    <property type="entry name" value="HotDog_dom_sf"/>
</dbReference>
<dbReference type="NCBIfam" id="TIGR01750">
    <property type="entry name" value="fabZ"/>
    <property type="match status" value="1"/>
</dbReference>
<dbReference type="NCBIfam" id="NF000582">
    <property type="entry name" value="PRK00006.1"/>
    <property type="match status" value="1"/>
</dbReference>
<dbReference type="PANTHER" id="PTHR30272">
    <property type="entry name" value="3-HYDROXYACYL-[ACYL-CARRIER-PROTEIN] DEHYDRATASE"/>
    <property type="match status" value="1"/>
</dbReference>
<dbReference type="PANTHER" id="PTHR30272:SF1">
    <property type="entry name" value="3-HYDROXYACYL-[ACYL-CARRIER-PROTEIN] DEHYDRATASE"/>
    <property type="match status" value="1"/>
</dbReference>
<dbReference type="Pfam" id="PF07977">
    <property type="entry name" value="FabA"/>
    <property type="match status" value="1"/>
</dbReference>
<dbReference type="SUPFAM" id="SSF54637">
    <property type="entry name" value="Thioesterase/thiol ester dehydrase-isomerase"/>
    <property type="match status" value="1"/>
</dbReference>